<comment type="function">
    <text evidence="1">Required for the expression of the mitochondrial gene for cytochrome c oxidase subunit III (COX3).</text>
</comment>
<comment type="subcellular location">
    <subcellularLocation>
        <location evidence="1">Mitochondrion inner membrane</location>
        <topology evidence="1">Peripheral membrane protein</topology>
    </subcellularLocation>
</comment>
<organism>
    <name type="scientific">Saccharomyces bayanus</name>
    <name type="common">Yeast</name>
    <name type="synonym">Saccharomyces uvarum x Saccharomyces eubayanus</name>
    <dbReference type="NCBI Taxonomy" id="4931"/>
    <lineage>
        <taxon>Eukaryota</taxon>
        <taxon>Fungi</taxon>
        <taxon>Dikarya</taxon>
        <taxon>Ascomycota</taxon>
        <taxon>Saccharomycotina</taxon>
        <taxon>Saccharomycetes</taxon>
        <taxon>Saccharomycetales</taxon>
        <taxon>Saccharomycetaceae</taxon>
        <taxon>Saccharomyces</taxon>
    </lineage>
</organism>
<feature type="chain" id="PRO_0000097084" description="COX3 mRNA-specific translational activator PET494">
    <location>
        <begin position="1"/>
        <end position="489"/>
    </location>
</feature>
<evidence type="ECO:0000250" key="1"/>
<gene>
    <name type="primary">PET494</name>
</gene>
<proteinExistence type="inferred from homology"/>
<accession>O59961</accession>
<name>PT494_SACBA</name>
<keyword id="KW-0010">Activator</keyword>
<keyword id="KW-0472">Membrane</keyword>
<keyword id="KW-0496">Mitochondrion</keyword>
<keyword id="KW-0999">Mitochondrion inner membrane</keyword>
<keyword id="KW-0810">Translation regulation</keyword>
<protein>
    <recommendedName>
        <fullName>COX3 mRNA-specific translational activator PET494</fullName>
    </recommendedName>
</protein>
<sequence length="489" mass="57648">MHLKKGKRSIGTVWRLLWKRLYSVHYKTNTYSTRSRKKLVTNFTRVNGLLLSCNGDTFPYMRTLWRYFNAPGNLMFVTTNIITFTGIVAYNTMVTVSNERVFEEQMIAAQMSLAKQKEELETRALDFPANHEQIKEADDANCEQPAIERSGEDRSVKQQNEQLDSPIRHYSLTDLVLNKEARVADYDSQRVKASLFHMLYAYMLYRDTIQPNSDSPNHNSEEWRHEVELLTRDKWLQGAHQRIDVFYDLWNNQLDKIVTSPEKVQNFHLPNWSKYPTLLKFICTELHNNELTTLDEFKQFYGKVRSNEVKKLLGLWLYDHSFLFPRNIYDNKNQEVFYDTLISDSMQDNKIFQKYSSIVMNPDNERTQLFFPNIYAQPVNKPIPSISLETYTRLLRGYITLQETNCKYDYNDNIFKLISILKMNCFLQHDKKIRTGASVRILLPRDEDRSPVLNTIPQAEKKTCYQILSKNRDILALLKRISDIQIDSS</sequence>
<reference key="1">
    <citation type="journal article" date="2000" name="Genetics">
        <title>Highly diverged homologs of Saccharomyces cerevisiae mitochondrial mRNA-specific translational activators have orthologous functions in other budding yeasts.</title>
        <authorList>
            <person name="Costanzo M.C."/>
            <person name="Bonnefoy N."/>
            <person name="Williams E.H."/>
            <person name="Clark-Walker G.D."/>
            <person name="Fox T.D."/>
        </authorList>
    </citation>
    <scope>NUCLEOTIDE SEQUENCE [GENOMIC DNA]</scope>
    <source>
        <strain>ATCC 76513 / CBS 380 / DSM 70412 / JCM 7258 / NBRC 1127 / NRRL Y-12624</strain>
    </source>
</reference>
<dbReference type="EMBL" id="AF056620">
    <property type="protein sequence ID" value="AAC13688.1"/>
    <property type="molecule type" value="Genomic_DNA"/>
</dbReference>
<dbReference type="SMR" id="O59961"/>
<dbReference type="GO" id="GO:0005743">
    <property type="term" value="C:mitochondrial inner membrane"/>
    <property type="evidence" value="ECO:0007669"/>
    <property type="project" value="UniProtKB-SubCell"/>
</dbReference>
<dbReference type="GO" id="GO:0006417">
    <property type="term" value="P:regulation of translation"/>
    <property type="evidence" value="ECO:0007669"/>
    <property type="project" value="UniProtKB-KW"/>
</dbReference>